<organism>
    <name type="scientific">Xenopus laevis</name>
    <name type="common">African clawed frog</name>
    <dbReference type="NCBI Taxonomy" id="8355"/>
    <lineage>
        <taxon>Eukaryota</taxon>
        <taxon>Metazoa</taxon>
        <taxon>Chordata</taxon>
        <taxon>Craniata</taxon>
        <taxon>Vertebrata</taxon>
        <taxon>Euteleostomi</taxon>
        <taxon>Amphibia</taxon>
        <taxon>Batrachia</taxon>
        <taxon>Anura</taxon>
        <taxon>Pipoidea</taxon>
        <taxon>Pipidae</taxon>
        <taxon>Xenopodinae</taxon>
        <taxon>Xenopus</taxon>
        <taxon>Xenopus</taxon>
    </lineage>
</organism>
<keyword id="KW-0025">Alternative splicing</keyword>
<keyword id="KW-0217">Developmental protein</keyword>
<keyword id="KW-0238">DNA-binding</keyword>
<keyword id="KW-0539">Nucleus</keyword>
<keyword id="KW-0563">Paired box</keyword>
<keyword id="KW-1185">Reference proteome</keyword>
<keyword id="KW-0709">Segmentation polarity protein</keyword>
<keyword id="KW-0804">Transcription</keyword>
<keyword id="KW-0805">Transcription regulation</keyword>
<feature type="chain" id="PRO_0000289132" description="Paired box protein Pax-2-A">
    <location>
        <begin position="1"/>
        <end position="497"/>
    </location>
</feature>
<feature type="DNA-binding region" description="Paired" evidence="3">
    <location>
        <begin position="16"/>
        <end position="142"/>
    </location>
</feature>
<feature type="region of interest" description="PAI subdomain" evidence="3">
    <location>
        <begin position="19"/>
        <end position="75"/>
    </location>
</feature>
<feature type="region of interest" description="RED subdomain" evidence="3">
    <location>
        <begin position="94"/>
        <end position="142"/>
    </location>
</feature>
<feature type="region of interest" description="Disordered" evidence="4">
    <location>
        <begin position="143"/>
        <end position="224"/>
    </location>
</feature>
<feature type="compositionally biased region" description="Low complexity" evidence="4">
    <location>
        <begin position="166"/>
        <end position="178"/>
    </location>
</feature>
<feature type="splice variant" id="VSP_052436" description="In isoform 6." evidence="9">
    <location>
        <begin position="166"/>
        <end position="376"/>
    </location>
</feature>
<feature type="splice variant" id="VSP_052435" description="In isoform 4." evidence="8">
    <location>
        <begin position="166"/>
        <end position="205"/>
    </location>
</feature>
<feature type="splice variant" id="VSP_052437" description="In isoform 5." evidence="8">
    <location>
        <begin position="206"/>
        <end position="376"/>
    </location>
</feature>
<feature type="splice variant" id="VSP_052438" description="In isoform 2, isoform 3 and isoform 4." evidence="8">
    <location>
        <begin position="307"/>
        <end position="376"/>
    </location>
</feature>
<feature type="splice variant" id="VSP_052439" description="In isoform 2, isoform 4 and isoform 6." evidence="8 9">
    <location>
        <begin position="412"/>
        <end position="444"/>
    </location>
</feature>
<feature type="splice variant" id="VSP_052440" description="In isoform 5 and isoform 6." evidence="8 9">
    <original>S</original>
    <variation>FLGS</variation>
    <location>
        <position position="445"/>
    </location>
</feature>
<feature type="sequence conflict" description="In Ref. 1; CAA71208." evidence="10" ref="1">
    <original>A</original>
    <variation>T</variation>
    <location>
        <position position="91"/>
    </location>
</feature>
<feature type="sequence conflict" description="In Ref. 1; CAA71208." evidence="10" ref="1">
    <original>Q</original>
    <variation>R</variation>
    <location>
        <position position="144"/>
    </location>
</feature>
<proteinExistence type="evidence at transcript level"/>
<sequence length="497" mass="53204">MDMHCKADPFSAMHPGHGGVNQLGGVFVNGRPLPDVVRQRIVELAHQGVRPCDISRQLRVSHGCVSKILGRYYETGSIKPGVIGGSKPKVATPKVVDKIAEYKRQNPTMFAWEIRDRLLAEGICDNDTVPSVSSINRIIRTKVQQPFHPTPDGSGTPVGTPGHTLVPSTASPPVSSASNDPVGSYSINGILGIPRSNGEKRKRDEDGSDGSGPNGDSQSSVESLRKHLRADNFTQQQLEALDRVFERPSYPDVFQTAEHIKSEQASEYSLPALTPGLDEVKSSLSASGNADLGSNVSGPQSYPVVTESFASHLYVKQEPHEASLTPFTPSSLASSGLADIQPFQMALTVDASTPTYSSFTHHGPHYGQFGSQPLIAGRDMSSTTLPGYPPHVPPTGQGSYPTSTLAGMVPGTNVSVHHSVQPVECCSCLSSSKPCLFHCRTGSGSEFSGNPYSHPQYTTYNEAWRFSNPALLSSPYYYSATSRGSAPPTAATAYDRH</sequence>
<comment type="function">
    <text evidence="1">Probable transcription factor. Involved in kidney development, acting synergistically with lhx1/lim-1 in pronephric morphogenesis during the tailbud stages (By similarity).</text>
</comment>
<comment type="subcellular location">
    <subcellularLocation>
        <location evidence="2 3">Nucleus</location>
    </subcellularLocation>
</comment>
<comment type="alternative products">
    <event type="alternative splicing"/>
    <isoform>
        <id>O57685-1</id>
        <name>1</name>
        <name evidence="7">4</name>
        <sequence type="displayed"/>
    </isoform>
    <isoform>
        <id>O57685-2</id>
        <name>2</name>
        <name evidence="7">1</name>
        <sequence type="described" ref="VSP_052438 VSP_052439"/>
    </isoform>
    <isoform>
        <id>O57685-3</id>
        <name evidence="7">3</name>
        <sequence type="described" ref="VSP_052438"/>
    </isoform>
    <isoform>
        <id>O57685-4</id>
        <name>4</name>
        <name evidence="7">5</name>
        <sequence type="described" ref="VSP_052435 VSP_052438 VSP_052439"/>
    </isoform>
    <isoform>
        <id>O57685-5</id>
        <name>5</name>
        <name evidence="7">7</name>
        <sequence type="described" ref="VSP_052437 VSP_052440"/>
    </isoform>
    <isoform>
        <id>O57685-6</id>
        <name>6</name>
        <name>10</name>
        <sequence type="described" ref="VSP_052436 VSP_052439 VSP_052440"/>
    </isoform>
</comment>
<comment type="tissue specificity">
    <text evidence="5 6 7">Expression becomes spatially localized at mid-gastrula stages and is confined to the nervous system (midbrain, hindbrain, spinal cord), sensory organs (optic vesicle and stalk, otic vesicle), visceral arches, developing excretory system (pronephros, pronephric duct, rectal diverticulum, proctodaeum) and thyroid gland. Splicing does not appear to be tissue-specific and tissues displayed the same spectrum of splice variants.</text>
</comment>
<comment type="developmental stage">
    <text evidence="7">Splicing is temporally regulated. Isoform 5 is expressed both maternally and zygotically, whereas isoform 1, isoform 2, isoform 3 and isoform 4 are exclusively zygotic. Expression is highest in embryos from stage 12 on, with expression levels remaining constant throughout embryogenesis.</text>
</comment>
<comment type="induction">
    <text evidence="7">By activin. Weakly by bFGF.</text>
</comment>
<name>PAX2A_XENLA</name>
<evidence type="ECO:0000250" key="1">
    <source>
        <dbReference type="UniProtKB" id="O57682"/>
    </source>
</evidence>
<evidence type="ECO:0000250" key="2">
    <source>
        <dbReference type="UniProtKB" id="Q02962"/>
    </source>
</evidence>
<evidence type="ECO:0000255" key="3">
    <source>
        <dbReference type="PROSITE-ProRule" id="PRU00381"/>
    </source>
</evidence>
<evidence type="ECO:0000256" key="4">
    <source>
        <dbReference type="SAM" id="MobiDB-lite"/>
    </source>
</evidence>
<evidence type="ECO:0000269" key="5">
    <source>
    </source>
</evidence>
<evidence type="ECO:0000269" key="6">
    <source>
    </source>
</evidence>
<evidence type="ECO:0000269" key="7">
    <source>
    </source>
</evidence>
<evidence type="ECO:0000303" key="8">
    <source>
    </source>
</evidence>
<evidence type="ECO:0000303" key="9">
    <source ref="2"/>
</evidence>
<evidence type="ECO:0000305" key="10"/>
<evidence type="ECO:0000312" key="11">
    <source>
        <dbReference type="EMBL" id="AAH55960.1"/>
    </source>
</evidence>
<evidence type="ECO:0000312" key="12">
    <source>
        <dbReference type="EMBL" id="CAA71207.1"/>
    </source>
</evidence>
<evidence type="ECO:0000312" key="13">
    <source>
        <dbReference type="EMBL" id="CAA71208.1"/>
    </source>
</evidence>
<protein>
    <recommendedName>
        <fullName>Paired box protein Pax-2-A</fullName>
        <shortName>xPax-2a</shortName>
    </recommendedName>
</protein>
<dbReference type="EMBL" id="Y10119">
    <property type="protein sequence ID" value="CAA71205.1"/>
    <property type="molecule type" value="mRNA"/>
</dbReference>
<dbReference type="EMBL" id="Y10121">
    <property type="protein sequence ID" value="CAA71207.1"/>
    <property type="molecule type" value="mRNA"/>
</dbReference>
<dbReference type="EMBL" id="Y10122">
    <property type="protein sequence ID" value="CAA71208.1"/>
    <property type="molecule type" value="mRNA"/>
</dbReference>
<dbReference type="EMBL" id="Y10123">
    <property type="protein sequence ID" value="CAA71209.1"/>
    <property type="molecule type" value="mRNA"/>
</dbReference>
<dbReference type="EMBL" id="AJ000667">
    <property type="protein sequence ID" value="CAA04223.1"/>
    <property type="molecule type" value="mRNA"/>
</dbReference>
<dbReference type="EMBL" id="BC055960">
    <property type="protein sequence ID" value="AAH55960.1"/>
    <property type="molecule type" value="mRNA"/>
</dbReference>
<dbReference type="RefSeq" id="NP_001079830.1">
    <molecule id="O57685-3"/>
    <property type="nucleotide sequence ID" value="NM_001086361.1"/>
</dbReference>
<dbReference type="RefSeq" id="XP_018079766.1">
    <molecule id="O57685-1"/>
    <property type="nucleotide sequence ID" value="XM_018224277.1"/>
</dbReference>
<dbReference type="RefSeq" id="XP_018079772.1">
    <molecule id="O57685-2"/>
    <property type="nucleotide sequence ID" value="XM_018224283.1"/>
</dbReference>
<dbReference type="RefSeq" id="XP_018079775.1">
    <molecule id="O57685-4"/>
    <property type="nucleotide sequence ID" value="XM_018224286.1"/>
</dbReference>
<dbReference type="SMR" id="O57685"/>
<dbReference type="DNASU" id="379520"/>
<dbReference type="GeneID" id="379520"/>
<dbReference type="KEGG" id="xla:379520"/>
<dbReference type="AGR" id="Xenbase:XB-GENE-486805"/>
<dbReference type="CTD" id="379520"/>
<dbReference type="Xenbase" id="XB-GENE-486805">
    <property type="gene designation" value="pax2.L"/>
</dbReference>
<dbReference type="OMA" id="FRCRGGH"/>
<dbReference type="OrthoDB" id="3225452at2759"/>
<dbReference type="Proteomes" id="UP000186698">
    <property type="component" value="Chromosome 7L"/>
</dbReference>
<dbReference type="Bgee" id="379520">
    <property type="expression patterns" value="Expressed in kidney and 4 other cell types or tissues"/>
</dbReference>
<dbReference type="GO" id="GO:0005634">
    <property type="term" value="C:nucleus"/>
    <property type="evidence" value="ECO:0000250"/>
    <property type="project" value="UniProtKB"/>
</dbReference>
<dbReference type="GO" id="GO:0003677">
    <property type="term" value="F:DNA binding"/>
    <property type="evidence" value="ECO:0000250"/>
    <property type="project" value="UniProtKB"/>
</dbReference>
<dbReference type="GO" id="GO:0000981">
    <property type="term" value="F:DNA-binding transcription factor activity, RNA polymerase II-specific"/>
    <property type="evidence" value="ECO:0000318"/>
    <property type="project" value="GO_Central"/>
</dbReference>
<dbReference type="GO" id="GO:0000978">
    <property type="term" value="F:RNA polymerase II cis-regulatory region sequence-specific DNA binding"/>
    <property type="evidence" value="ECO:0000318"/>
    <property type="project" value="GO_Central"/>
</dbReference>
<dbReference type="GO" id="GO:0000122">
    <property type="term" value="P:negative regulation of transcription by RNA polymerase II"/>
    <property type="evidence" value="ECO:0000250"/>
    <property type="project" value="UniProtKB"/>
</dbReference>
<dbReference type="GO" id="GO:0007399">
    <property type="term" value="P:nervous system development"/>
    <property type="evidence" value="ECO:0000318"/>
    <property type="project" value="GO_Central"/>
</dbReference>
<dbReference type="GO" id="GO:0045944">
    <property type="term" value="P:positive regulation of transcription by RNA polymerase II"/>
    <property type="evidence" value="ECO:0000250"/>
    <property type="project" value="UniProtKB"/>
</dbReference>
<dbReference type="GO" id="GO:0006357">
    <property type="term" value="P:regulation of transcription by RNA polymerase II"/>
    <property type="evidence" value="ECO:0000318"/>
    <property type="project" value="GO_Central"/>
</dbReference>
<dbReference type="GO" id="GO:0007367">
    <property type="term" value="P:segment polarity determination"/>
    <property type="evidence" value="ECO:0007669"/>
    <property type="project" value="UniProtKB-KW"/>
</dbReference>
<dbReference type="GO" id="GO:0007423">
    <property type="term" value="P:sensory organ development"/>
    <property type="evidence" value="ECO:0000318"/>
    <property type="project" value="GO_Central"/>
</dbReference>
<dbReference type="GO" id="GO:0030878">
    <property type="term" value="P:thyroid gland development"/>
    <property type="evidence" value="ECO:0000270"/>
    <property type="project" value="Xenbase"/>
</dbReference>
<dbReference type="CDD" id="cd00131">
    <property type="entry name" value="PAX"/>
    <property type="match status" value="1"/>
</dbReference>
<dbReference type="FunFam" id="1.10.10.10:FF:000013">
    <property type="entry name" value="Paired box 8 isoform 1"/>
    <property type="match status" value="1"/>
</dbReference>
<dbReference type="FunFam" id="1.10.10.10:FF:000003">
    <property type="entry name" value="Paired box protein Pax-6"/>
    <property type="match status" value="1"/>
</dbReference>
<dbReference type="Gene3D" id="1.10.10.10">
    <property type="entry name" value="Winged helix-like DNA-binding domain superfamily/Winged helix DNA-binding domain"/>
    <property type="match status" value="2"/>
</dbReference>
<dbReference type="InterPro" id="IPR009057">
    <property type="entry name" value="Homeodomain-like_sf"/>
</dbReference>
<dbReference type="InterPro" id="IPR043182">
    <property type="entry name" value="PAIRED_DNA-bd_dom"/>
</dbReference>
<dbReference type="InterPro" id="IPR001523">
    <property type="entry name" value="Paired_dom"/>
</dbReference>
<dbReference type="InterPro" id="IPR022130">
    <property type="entry name" value="Pax2_C"/>
</dbReference>
<dbReference type="InterPro" id="IPR043565">
    <property type="entry name" value="PAX_fam"/>
</dbReference>
<dbReference type="InterPro" id="IPR036388">
    <property type="entry name" value="WH-like_DNA-bd_sf"/>
</dbReference>
<dbReference type="PANTHER" id="PTHR45636:SF19">
    <property type="entry name" value="PAIRED BOX PROTEIN PAX-2"/>
    <property type="match status" value="1"/>
</dbReference>
<dbReference type="PANTHER" id="PTHR45636">
    <property type="entry name" value="PAIRED BOX PROTEIN PAX-6-RELATED-RELATED"/>
    <property type="match status" value="1"/>
</dbReference>
<dbReference type="Pfam" id="PF00292">
    <property type="entry name" value="PAX"/>
    <property type="match status" value="1"/>
</dbReference>
<dbReference type="Pfam" id="PF12403">
    <property type="entry name" value="Pax2_C"/>
    <property type="match status" value="2"/>
</dbReference>
<dbReference type="PRINTS" id="PR00027">
    <property type="entry name" value="PAIREDBOX"/>
</dbReference>
<dbReference type="SMART" id="SM00351">
    <property type="entry name" value="PAX"/>
    <property type="match status" value="1"/>
</dbReference>
<dbReference type="SUPFAM" id="SSF46689">
    <property type="entry name" value="Homeodomain-like"/>
    <property type="match status" value="1"/>
</dbReference>
<dbReference type="PROSITE" id="PS00034">
    <property type="entry name" value="PAIRED_1"/>
    <property type="match status" value="1"/>
</dbReference>
<dbReference type="PROSITE" id="PS51057">
    <property type="entry name" value="PAIRED_2"/>
    <property type="match status" value="1"/>
</dbReference>
<accession>O57685</accession>
<accession>O57677</accession>
<accession>O57680</accession>
<accession>O57681</accession>
<accession>O57684</accession>
<accession>Q7SZU4</accession>
<gene>
    <name type="primary">pax2-a</name>
    <name evidence="13" type="synonym">pax-2a</name>
</gene>
<reference evidence="10 13" key="1">
    <citation type="journal article" date="1997" name="Mech. Dev.">
        <title>Xenopus Pax-2 displays multiple splice forms during embryogenesis and pronephric kidney development.</title>
        <authorList>
            <person name="Heller N."/>
            <person name="Braendli A.W."/>
        </authorList>
    </citation>
    <scope>NUCLEOTIDE SEQUENCE [MRNA] (ISOFORMS 1; 2; 3; 4 AND 5)</scope>
    <scope>TISSUE SPECIFICITY</scope>
    <scope>DEVELOPMENTAL STAGE</scope>
    <scope>INDUCTION</scope>
    <source>
        <tissue evidence="12">Embryonic head</tissue>
        <tissue evidence="7">Embryonic kidney</tissue>
    </source>
</reference>
<reference evidence="10 11" key="2">
    <citation type="submission" date="2003-08" db="EMBL/GenBank/DDBJ databases">
        <authorList>
            <consortium name="NIH - Xenopus Gene Collection (XGC) project"/>
        </authorList>
    </citation>
    <scope>NUCLEOTIDE SEQUENCE [LARGE SCALE MRNA] (ISOFORM 6)</scope>
    <source>
        <tissue evidence="11">Embryo</tissue>
    </source>
</reference>
<reference evidence="10" key="3">
    <citation type="journal article" date="1999" name="Dev. Genet.">
        <title>Xenopus Pax-2/5/8 orthologues: novel insights into Pax gene evolution and identification of Pax-8 as the earliest marker for otic and pronephric cell lineages.</title>
        <authorList>
            <person name="Heller N."/>
            <person name="Braendli A.W."/>
        </authorList>
    </citation>
    <scope>TISSUE SPECIFICITY</scope>
</reference>
<reference evidence="10" key="4">
    <citation type="journal article" date="2004" name="Dev. Biol.">
        <title>Molecular anatomy of placode development in Xenopus laevis.</title>
        <authorList>
            <person name="Schlosser G."/>
            <person name="Ahrens K."/>
        </authorList>
    </citation>
    <scope>TISSUE SPECIFICITY</scope>
</reference>